<comment type="function">
    <text evidence="3 7">LEA proteins are late embryonic proteins abundant in higher plant seed embryos. The function of those proteins is not known (Probable). Promotes germination rate. Enhances cation toxicity (e.g. lithium ion) and osmotic stress (e.g. NaCl and sorbitol) tolerance during germination and in seedlings (PubMed:12175017).</text>
</comment>
<comment type="interaction">
    <interactant intactId="EBI-25520978">
        <id>Q9LJ97</id>
    </interactant>
    <interactant intactId="EBI-632620">
        <id>O04492</id>
        <label>DRB1</label>
    </interactant>
    <organismsDiffer>false</organismsDiffer>
    <experiments>3</experiments>
</comment>
<comment type="interaction">
    <interactant intactId="EBI-25520978">
        <id>Q9LJ97</id>
    </interactant>
    <interactant intactId="EBI-2363373">
        <id>Q9FIF5</id>
        <label>SAG113</label>
    </interactant>
    <organismsDiffer>false</organismsDiffer>
    <experiments>3</experiments>
</comment>
<comment type="subcellular location">
    <subcellularLocation>
        <location evidence="3">Nucleus</location>
        <location evidence="3">Nucleolus</location>
    </subcellularLocation>
    <subcellularLocation>
        <location evidence="3 4">Nucleus</location>
    </subcellularLocation>
    <subcellularLocation>
        <location evidence="4">Cytoplasm</location>
    </subcellularLocation>
    <text evidence="3">Present in the nucleus and nucleolus of mature embryos cells.</text>
</comment>
<comment type="tissue specificity">
    <text evidence="2">Embryo specific, only in dry mature seeds.</text>
</comment>
<comment type="developmental stage">
    <text evidence="2">In mature embryos, restricted to provascular tissues. Also present in the seed coat outer tegument and silique epidermis. Levels decrease during seed imbibition and germination.</text>
</comment>
<comment type="induction">
    <text evidence="2">Stimulated in embryos by the transcriptional activator ABI3. Not induced in vegetative tissues by abscisic acid (ABA), osmotic stress or dehydration.</text>
</comment>
<comment type="similarity">
    <text evidence="7">Belongs to the LEA type SMP family.</text>
</comment>
<comment type="sequence caution" evidence="7">
    <conflict type="frameshift">
        <sequence resource="EMBL-CDS" id="CAA63085"/>
    </conflict>
</comment>
<dbReference type="EMBL" id="X92115">
    <property type="protein sequence ID" value="CAA63085.1"/>
    <property type="status" value="ALT_FRAME"/>
    <property type="molecule type" value="mRNA"/>
</dbReference>
<dbReference type="EMBL" id="AP000731">
    <property type="protein sequence ID" value="BAB01464.1"/>
    <property type="molecule type" value="Genomic_DNA"/>
</dbReference>
<dbReference type="EMBL" id="CP002686">
    <property type="protein sequence ID" value="AEE76646.1"/>
    <property type="molecule type" value="Genomic_DNA"/>
</dbReference>
<dbReference type="EMBL" id="BT002907">
    <property type="protein sequence ID" value="AAO22723.1"/>
    <property type="molecule type" value="mRNA"/>
</dbReference>
<dbReference type="EMBL" id="BT004425">
    <property type="protein sequence ID" value="AAO42419.1"/>
    <property type="molecule type" value="mRNA"/>
</dbReference>
<dbReference type="EMBL" id="Z29875">
    <property type="protein sequence ID" value="CAA82828.1"/>
    <property type="molecule type" value="mRNA"/>
</dbReference>
<dbReference type="PIR" id="S71260">
    <property type="entry name" value="S71260"/>
</dbReference>
<dbReference type="RefSeq" id="NP_188888.1">
    <property type="nucleotide sequence ID" value="NM_113148.1"/>
</dbReference>
<dbReference type="FunCoup" id="Q9LJ97">
    <property type="interactions" value="101"/>
</dbReference>
<dbReference type="IntAct" id="Q9LJ97">
    <property type="interactions" value="2"/>
</dbReference>
<dbReference type="STRING" id="3702.Q9LJ97"/>
<dbReference type="PaxDb" id="3702-AT3G22490.1"/>
<dbReference type="ProMEX" id="Q9LJ97"/>
<dbReference type="ProteomicsDB" id="230197"/>
<dbReference type="EnsemblPlants" id="AT3G22490.1">
    <property type="protein sequence ID" value="AT3G22490.1"/>
    <property type="gene ID" value="AT3G22490"/>
</dbReference>
<dbReference type="GeneID" id="821820"/>
<dbReference type="Gramene" id="AT3G22490.1">
    <property type="protein sequence ID" value="AT3G22490.1"/>
    <property type="gene ID" value="AT3G22490"/>
</dbReference>
<dbReference type="KEGG" id="ath:AT3G22490"/>
<dbReference type="Araport" id="AT3G22490"/>
<dbReference type="TAIR" id="AT3G22490">
    <property type="gene designation" value="ATRAB28"/>
</dbReference>
<dbReference type="eggNOG" id="ENOG502QPSX">
    <property type="taxonomic scope" value="Eukaryota"/>
</dbReference>
<dbReference type="HOGENOM" id="CLU_075678_0_0_1"/>
<dbReference type="InParanoid" id="Q9LJ97"/>
<dbReference type="OMA" id="DADMMQT"/>
<dbReference type="PhylomeDB" id="Q9LJ97"/>
<dbReference type="PRO" id="PR:Q9LJ97"/>
<dbReference type="Proteomes" id="UP000006548">
    <property type="component" value="Chromosome 3"/>
</dbReference>
<dbReference type="ExpressionAtlas" id="Q9LJ97">
    <property type="expression patterns" value="baseline and differential"/>
</dbReference>
<dbReference type="GO" id="GO:0005829">
    <property type="term" value="C:cytosol"/>
    <property type="evidence" value="ECO:0007005"/>
    <property type="project" value="TAIR"/>
</dbReference>
<dbReference type="GO" id="GO:0005730">
    <property type="term" value="C:nucleolus"/>
    <property type="evidence" value="ECO:0000314"/>
    <property type="project" value="UniProtKB"/>
</dbReference>
<dbReference type="GO" id="GO:0005634">
    <property type="term" value="C:nucleus"/>
    <property type="evidence" value="ECO:0000314"/>
    <property type="project" value="UniProtKB"/>
</dbReference>
<dbReference type="GO" id="GO:0006873">
    <property type="term" value="P:intracellular monoatomic ion homeostasis"/>
    <property type="evidence" value="ECO:0000315"/>
    <property type="project" value="UniProtKB"/>
</dbReference>
<dbReference type="GO" id="GO:0010226">
    <property type="term" value="P:response to lithium ion"/>
    <property type="evidence" value="ECO:0000315"/>
    <property type="project" value="UniProtKB"/>
</dbReference>
<dbReference type="GO" id="GO:0009845">
    <property type="term" value="P:seed germination"/>
    <property type="evidence" value="ECO:0000315"/>
    <property type="project" value="UniProtKB"/>
</dbReference>
<dbReference type="InterPro" id="IPR042971">
    <property type="entry name" value="LEA_SMP"/>
</dbReference>
<dbReference type="InterPro" id="IPR007011">
    <property type="entry name" value="LEA_SMP_dom"/>
</dbReference>
<dbReference type="PANTHER" id="PTHR31174:SF7">
    <property type="entry name" value="LATE EMBRYOGENESIS ABUNDANT PROTEIN 31-RELATED"/>
    <property type="match status" value="1"/>
</dbReference>
<dbReference type="PANTHER" id="PTHR31174">
    <property type="entry name" value="SEED MATURATION FAMILY PROTEIN"/>
    <property type="match status" value="1"/>
</dbReference>
<dbReference type="Pfam" id="PF04927">
    <property type="entry name" value="SMP"/>
    <property type="match status" value="3"/>
</dbReference>
<feature type="chain" id="PRO_0000436059" description="Late embryogenesis abundant protein 31">
    <location>
        <begin position="1"/>
        <end position="262"/>
    </location>
</feature>
<feature type="domain" description="SMP 1" evidence="1">
    <location>
        <begin position="14"/>
        <end position="68"/>
    </location>
</feature>
<feature type="domain" description="SMP 2" evidence="1">
    <location>
        <begin position="136"/>
        <end position="192"/>
    </location>
</feature>
<feature type="domain" description="SMP 3" evidence="1">
    <location>
        <begin position="201"/>
        <end position="260"/>
    </location>
</feature>
<feature type="short sequence motif" description="Nuclear localization signal (NLS)" evidence="3">
    <location>
        <begin position="6"/>
        <end position="10"/>
    </location>
</feature>
<feature type="mutagenesis site" description="Reduced targeting to nucleus leading to both cytoplasmic and nuclear localization." evidence="3">
    <original>KR</original>
    <variation>TL</variation>
    <location>
        <begin position="8"/>
        <end position="9"/>
    </location>
</feature>
<feature type="sequence conflict" description="In Ref. 1; CAA63085." evidence="7" ref="1">
    <original>AMEAEV</original>
    <variation>VYGKQKL</variation>
    <location>
        <begin position="122"/>
        <end position="127"/>
    </location>
</feature>
<feature type="sequence conflict" description="In Ref. 5; CAA82828." evidence="7" ref="5">
    <original>A</original>
    <variation>S</variation>
    <location>
        <position position="219"/>
    </location>
</feature>
<feature type="sequence conflict" description="In Ref. 5; CAA82828." evidence="7" ref="5">
    <original>S</original>
    <variation>I</variation>
    <location>
        <position position="230"/>
    </location>
</feature>
<reference key="1">
    <citation type="submission" date="1995-10" db="EMBL/GenBank/DDBJ databases">
        <authorList>
            <person name="Raynal M."/>
        </authorList>
    </citation>
    <scope>NUCLEOTIDE SEQUENCE [MRNA]</scope>
    <source>
        <strain>cv. Columbia</strain>
    </source>
</reference>
<reference key="2">
    <citation type="journal article" date="2000" name="DNA Res.">
        <title>Structural analysis of Arabidopsis thaliana chromosome 3. II. Sequence features of the 4,251,695 bp regions covered by 90 P1, TAC and BAC clones.</title>
        <authorList>
            <person name="Kaneko T."/>
            <person name="Katoh T."/>
            <person name="Sato S."/>
            <person name="Nakamura Y."/>
            <person name="Asamizu E."/>
            <person name="Tabata S."/>
        </authorList>
    </citation>
    <scope>NUCLEOTIDE SEQUENCE [LARGE SCALE GENOMIC DNA]</scope>
    <source>
        <strain>cv. Columbia</strain>
    </source>
</reference>
<reference key="3">
    <citation type="journal article" date="2017" name="Plant J.">
        <title>Araport11: a complete reannotation of the Arabidopsis thaliana reference genome.</title>
        <authorList>
            <person name="Cheng C.Y."/>
            <person name="Krishnakumar V."/>
            <person name="Chan A.P."/>
            <person name="Thibaud-Nissen F."/>
            <person name="Schobel S."/>
            <person name="Town C.D."/>
        </authorList>
    </citation>
    <scope>GENOME REANNOTATION</scope>
    <source>
        <strain>cv. Columbia</strain>
    </source>
</reference>
<reference key="4">
    <citation type="journal article" date="2003" name="Science">
        <title>Empirical analysis of transcriptional activity in the Arabidopsis genome.</title>
        <authorList>
            <person name="Yamada K."/>
            <person name="Lim J."/>
            <person name="Dale J.M."/>
            <person name="Chen H."/>
            <person name="Shinn P."/>
            <person name="Palm C.J."/>
            <person name="Southwick A.M."/>
            <person name="Wu H.C."/>
            <person name="Kim C.J."/>
            <person name="Nguyen M."/>
            <person name="Pham P.K."/>
            <person name="Cheuk R.F."/>
            <person name="Karlin-Newmann G."/>
            <person name="Liu S.X."/>
            <person name="Lam B."/>
            <person name="Sakano H."/>
            <person name="Wu T."/>
            <person name="Yu G."/>
            <person name="Miranda M."/>
            <person name="Quach H.L."/>
            <person name="Tripp M."/>
            <person name="Chang C.H."/>
            <person name="Lee J.M."/>
            <person name="Toriumi M.J."/>
            <person name="Chan M.M."/>
            <person name="Tang C.C."/>
            <person name="Onodera C.S."/>
            <person name="Deng J.M."/>
            <person name="Akiyama K."/>
            <person name="Ansari Y."/>
            <person name="Arakawa T."/>
            <person name="Banh J."/>
            <person name="Banno F."/>
            <person name="Bowser L."/>
            <person name="Brooks S.Y."/>
            <person name="Carninci P."/>
            <person name="Chao Q."/>
            <person name="Choy N."/>
            <person name="Enju A."/>
            <person name="Goldsmith A.D."/>
            <person name="Gurjal M."/>
            <person name="Hansen N.F."/>
            <person name="Hayashizaki Y."/>
            <person name="Johnson-Hopson C."/>
            <person name="Hsuan V.W."/>
            <person name="Iida K."/>
            <person name="Karnes M."/>
            <person name="Khan S."/>
            <person name="Koesema E."/>
            <person name="Ishida J."/>
            <person name="Jiang P.X."/>
            <person name="Jones T."/>
            <person name="Kawai J."/>
            <person name="Kamiya A."/>
            <person name="Meyers C."/>
            <person name="Nakajima M."/>
            <person name="Narusaka M."/>
            <person name="Seki M."/>
            <person name="Sakurai T."/>
            <person name="Satou M."/>
            <person name="Tamse R."/>
            <person name="Vaysberg M."/>
            <person name="Wallender E.K."/>
            <person name="Wong C."/>
            <person name="Yamamura Y."/>
            <person name="Yuan S."/>
            <person name="Shinozaki K."/>
            <person name="Davis R.W."/>
            <person name="Theologis A."/>
            <person name="Ecker J.R."/>
        </authorList>
    </citation>
    <scope>NUCLEOTIDE SEQUENCE [LARGE SCALE MRNA]</scope>
    <source>
        <strain>cv. Columbia</strain>
    </source>
</reference>
<reference key="5">
    <citation type="submission" date="1994-02" db="EMBL/GenBank/DDBJ databases">
        <title>The Arabidopsis thaliana transcribed genome: the GDR cDNA program.</title>
        <authorList>
            <person name="Raynal M."/>
            <person name="Grellet F."/>
            <person name="Laudie M."/>
            <person name="Meyer Y."/>
            <person name="Cooke R."/>
            <person name="Delseny M."/>
        </authorList>
    </citation>
    <scope>NUCLEOTIDE SEQUENCE [MRNA] OF 163-262</scope>
    <source>
        <strain>cv. Columbia</strain>
        <tissue>Dry seed</tissue>
    </source>
</reference>
<reference key="6">
    <citation type="journal article" date="1999" name="Plant Mol. Biol.">
        <title>Expression and cellular localization of Atrab28 during arabidopsis embryogenesis.</title>
        <authorList>
            <person name="Arenas-Mena C."/>
            <person name="Raynal M."/>
            <person name="Borrell A."/>
            <person name="Varoquaux F."/>
            <person name="Cutanda M.C."/>
            <person name="Stacy R.A.P."/>
            <person name="Pages M."/>
            <person name="Delseny M."/>
            <person name="Culianez-Macia F.A."/>
        </authorList>
    </citation>
    <scope>TISSUE SPECIFICITY</scope>
    <scope>INDUCTION BY ABI3</scope>
    <scope>DEVELOPMENTAL STAGE</scope>
    <source>
        <strain>cv. Columbia</strain>
    </source>
</reference>
<reference key="7">
    <citation type="journal article" date="2002" name="Plant Mol. Biol.">
        <title>Arabidopsis thaliana atrab28: a nuclear targeted protein related to germination and toxic cation tolerance.</title>
        <authorList>
            <person name="Borrell A."/>
            <person name="Cutanda M.C."/>
            <person name="Lumbreras V."/>
            <person name="Pujal J."/>
            <person name="Goday A."/>
            <person name="Culianez-Macia F.A."/>
            <person name="Pages M."/>
        </authorList>
    </citation>
    <scope>FUNCTION</scope>
    <scope>MUTAGENESIS OF 8-LYS-ARG-9</scope>
    <scope>SUBCELLULAR LOCATION</scope>
    <scope>NUCLEAR LOCALIZATION SIGNAL</scope>
    <source>
        <strain>cv. Columbia</strain>
    </source>
</reference>
<reference key="8">
    <citation type="journal article" date="2008" name="BMC Genomics">
        <title>LEA (late embryogenesis abundant) proteins and their encoding genes in Arabidopsis thaliana.</title>
        <authorList>
            <person name="Hundertmark M."/>
            <person name="Hincha D.K."/>
        </authorList>
    </citation>
    <scope>GENE FAMILY</scope>
    <scope>NOMENCLATURE</scope>
</reference>
<reference key="9">
    <citation type="journal article" date="2014" name="Plant Cell">
        <title>The ubiquitous distribution of late embryogenesis abundant proteins across cell compartments in Arabidopsis offers tailored protection against abiotic stress.</title>
        <authorList>
            <person name="Candat A."/>
            <person name="Paszkiewicz G."/>
            <person name="Neveu M."/>
            <person name="Gautier R."/>
            <person name="Logan D.C."/>
            <person name="Avelange-Macherel M.-H."/>
            <person name="Macherel D."/>
        </authorList>
    </citation>
    <scope>SUBCELLULAR LOCATION</scope>
    <scope>GENE FAMILY</scope>
    <scope>NOMENCLATURE</scope>
</reference>
<organism evidence="9">
    <name type="scientific">Arabidopsis thaliana</name>
    <name type="common">Mouse-ear cress</name>
    <dbReference type="NCBI Taxonomy" id="3702"/>
    <lineage>
        <taxon>Eukaryota</taxon>
        <taxon>Viridiplantae</taxon>
        <taxon>Streptophyta</taxon>
        <taxon>Embryophyta</taxon>
        <taxon>Tracheophyta</taxon>
        <taxon>Spermatophyta</taxon>
        <taxon>Magnoliopsida</taxon>
        <taxon>eudicotyledons</taxon>
        <taxon>Gunneridae</taxon>
        <taxon>Pentapetalae</taxon>
        <taxon>rosids</taxon>
        <taxon>malvids</taxon>
        <taxon>Brassicales</taxon>
        <taxon>Brassicaceae</taxon>
        <taxon>Camelineae</taxon>
        <taxon>Arabidopsis</taxon>
    </lineage>
</organism>
<gene>
    <name evidence="5" type="primary">RAB28</name>
    <name evidence="8" type="ordered locus">At3g22490</name>
    <name evidence="9" type="ORF">F16J14.5</name>
</gene>
<proteinExistence type="evidence at protein level"/>
<protein>
    <recommendedName>
        <fullName evidence="6">Late embryogenesis abundant protein 31</fullName>
        <shortName evidence="6">LEA 31</shortName>
    </recommendedName>
    <alternativeName>
        <fullName evidence="5">Protein RESPONSIVE TO ABSCISIC ACID 28</fullName>
        <shortName evidence="5">AtRAB28</shortName>
    </alternativeName>
</protein>
<name>LEA31_ARATH</name>
<sequence>MSQEEQPKRPQEPVTYGDVFEVSGELADKPIAPEDANMMQAAETRVFGHTQKGGAAAVMQSAATANKRGGFVHPGDTTDLAAERGVTVAQTDVPGARVTTEFVGGQVVGQYVEPRPVATAAAMEAEVVGLSLQSAITIGEALEATVQTAGNKPVDQSDAAAIQAAEVRACGTNVIAPGGIAASAQSAANHNATIDRDEDKIKLIDVLAGATGKLAADKAVTRQDAEGVVSAELRNNPNLSTHPGGVAASITAAARLNERADI</sequence>
<evidence type="ECO:0000255" key="1"/>
<evidence type="ECO:0000269" key="2">
    <source>
    </source>
</evidence>
<evidence type="ECO:0000269" key="3">
    <source>
    </source>
</evidence>
<evidence type="ECO:0000269" key="4">
    <source>
    </source>
</evidence>
<evidence type="ECO:0000303" key="5">
    <source>
    </source>
</evidence>
<evidence type="ECO:0000303" key="6">
    <source>
    </source>
</evidence>
<evidence type="ECO:0000305" key="7"/>
<evidence type="ECO:0000312" key="8">
    <source>
        <dbReference type="Araport" id="AT3G22490"/>
    </source>
</evidence>
<evidence type="ECO:0000312" key="9">
    <source>
        <dbReference type="EMBL" id="BAB01464.1"/>
    </source>
</evidence>
<accession>Q9LJ97</accession>
<accession>Q39137</accession>
<accession>Q42234</accession>
<keyword id="KW-0963">Cytoplasm</keyword>
<keyword id="KW-0539">Nucleus</keyword>
<keyword id="KW-1185">Reference proteome</keyword>
<keyword id="KW-0677">Repeat</keyword>